<gene>
    <name type="primary">Vom1r97</name>
    <name type="synonym">V1ra12</name>
    <name type="synonym">V1rb9</name>
    <name type="synonym">Vmn1r41</name>
</gene>
<dbReference type="EMBL" id="AY510281">
    <property type="protein sequence ID" value="AAR87948.1"/>
    <property type="molecule type" value="mRNA"/>
</dbReference>
<dbReference type="EMBL" id="U36897">
    <property type="protein sequence ID" value="AAC52286.1"/>
    <property type="status" value="ALT_INIT"/>
    <property type="molecule type" value="mRNA"/>
</dbReference>
<dbReference type="PIR" id="I61747">
    <property type="entry name" value="I61747"/>
</dbReference>
<dbReference type="RefSeq" id="NP_775419.2">
    <property type="nucleotide sequence ID" value="NM_173297.3"/>
</dbReference>
<dbReference type="SMR" id="Q5J3M9"/>
<dbReference type="STRING" id="10116.ENSRNOP00000071173"/>
<dbReference type="GlyCosmos" id="Q5J3M9">
    <property type="glycosylation" value="1 site, No reported glycans"/>
</dbReference>
<dbReference type="GlyGen" id="Q5J3M9">
    <property type="glycosylation" value="1 site"/>
</dbReference>
<dbReference type="PaxDb" id="10116-ENSRNOP00000060982"/>
<dbReference type="Ensembl" id="ENSRNOT00000042796.2">
    <property type="protein sequence ID" value="ENSRNOP00000047657.2"/>
    <property type="gene ID" value="ENSRNOG00000068663.1"/>
</dbReference>
<dbReference type="Ensembl" id="ENSRNOT00000116872.1">
    <property type="protein sequence ID" value="ENSRNOP00000097028.1"/>
    <property type="gene ID" value="ENSRNOG00000068663.1"/>
</dbReference>
<dbReference type="GeneID" id="286956"/>
<dbReference type="KEGG" id="rno:286956"/>
<dbReference type="UCSC" id="RGD:708391">
    <property type="organism name" value="rat"/>
</dbReference>
<dbReference type="AGR" id="RGD:708391"/>
<dbReference type="RGD" id="708391">
    <property type="gene designation" value="Vom1r97"/>
</dbReference>
<dbReference type="eggNOG" id="ENOG502SNRJ">
    <property type="taxonomic scope" value="Eukaryota"/>
</dbReference>
<dbReference type="GeneTree" id="ENSGT01030000234553"/>
<dbReference type="HOGENOM" id="CLU_058641_0_0_1"/>
<dbReference type="InParanoid" id="Q5J3M9"/>
<dbReference type="OMA" id="ESKCLIV"/>
<dbReference type="OrthoDB" id="77513at9989"/>
<dbReference type="PhylomeDB" id="Q5J3M9"/>
<dbReference type="PRO" id="PR:Q5J3M9"/>
<dbReference type="Proteomes" id="UP000002494">
    <property type="component" value="Chromosome 4"/>
</dbReference>
<dbReference type="GO" id="GO:0005886">
    <property type="term" value="C:plasma membrane"/>
    <property type="evidence" value="ECO:0007669"/>
    <property type="project" value="UniProtKB-SubCell"/>
</dbReference>
<dbReference type="GO" id="GO:0016503">
    <property type="term" value="F:pheromone receptor activity"/>
    <property type="evidence" value="ECO:0007669"/>
    <property type="project" value="InterPro"/>
</dbReference>
<dbReference type="GO" id="GO:0019236">
    <property type="term" value="P:response to pheromone"/>
    <property type="evidence" value="ECO:0007669"/>
    <property type="project" value="UniProtKB-KW"/>
</dbReference>
<dbReference type="GO" id="GO:0007606">
    <property type="term" value="P:sensory perception of chemical stimulus"/>
    <property type="evidence" value="ECO:0007669"/>
    <property type="project" value="UniProtKB-ARBA"/>
</dbReference>
<dbReference type="CDD" id="cd13949">
    <property type="entry name" value="7tm_V1R_pheromone"/>
    <property type="match status" value="1"/>
</dbReference>
<dbReference type="FunFam" id="1.20.1070.10:FF:000051">
    <property type="entry name" value="Vomeronasal type-1 receptor"/>
    <property type="match status" value="1"/>
</dbReference>
<dbReference type="Gene3D" id="1.20.1070.10">
    <property type="entry name" value="Rhodopsin 7-helix transmembrane proteins"/>
    <property type="match status" value="1"/>
</dbReference>
<dbReference type="InterPro" id="IPR017452">
    <property type="entry name" value="GPCR_Rhodpsn_7TM"/>
</dbReference>
<dbReference type="InterPro" id="IPR004072">
    <property type="entry name" value="Vmron_rcpt_1"/>
</dbReference>
<dbReference type="PANTHER" id="PTHR24062">
    <property type="entry name" value="VOMERONASAL TYPE-1 RECEPTOR"/>
    <property type="match status" value="1"/>
</dbReference>
<dbReference type="Pfam" id="PF03402">
    <property type="entry name" value="V1R"/>
    <property type="match status" value="1"/>
</dbReference>
<dbReference type="PRINTS" id="PR01534">
    <property type="entry name" value="VOMERONASL1R"/>
</dbReference>
<dbReference type="SUPFAM" id="SSF81321">
    <property type="entry name" value="Family A G protein-coupled receptor-like"/>
    <property type="match status" value="1"/>
</dbReference>
<dbReference type="PROSITE" id="PS50262">
    <property type="entry name" value="G_PROTEIN_RECEP_F1_2"/>
    <property type="match status" value="1"/>
</dbReference>
<sequence length="310" mass="35286">MNKDNILHTDTNIKITLFSEVSIGISANSALFFSHLFMLFEKNRSKPIDLYIAFLSLTQLMLLITIGLIAADMFMSRGRWDSTTCQSLIYLHRLLRGFTLCATCLLNVLWTITLSPRSSCLTTFKHKSPHHISGAFLFFCVLYISFGSHLFLSTIATPNLTSDNFMYVTQSCSFLPMSYSRTSMFSTPMAIREALLIGLIGLSSGYMVAFLWRHKNQARHLHSTSLSSKVSPEQRATRTIMILMSFFVVLYILENVVFYSRMTFKDGSMFYCVQIIVSHSYATISPFVFICTEKRIIKLWGSMSSRIVSI</sequence>
<reference evidence="7" key="1">
    <citation type="submission" date="2003-12" db="EMBL/GenBank/DDBJ databases">
        <title>Rat vomeronasal receptors.</title>
        <authorList>
            <person name="Capello L."/>
            <person name="Rodriguez I."/>
        </authorList>
    </citation>
    <scope>NUCLEOTIDE SEQUENCE [MRNA]</scope>
</reference>
<reference evidence="5 6" key="2">
    <citation type="journal article" date="1995" name="Cell">
        <title>A novel family of genes encoding putative pheromone receptors in mammals.</title>
        <authorList>
            <person name="Dulac C."/>
            <person name="Axel R."/>
        </authorList>
    </citation>
    <scope>NUCLEOTIDE SEQUENCE [MRNA] OF 33-310</scope>
    <scope>PUTATIVE FUNCTION</scope>
    <scope>TISSUE SPECIFICITY</scope>
    <source>
        <strain evidence="6">Sprague-Dawley</strain>
        <tissue evidence="6">Vomeronasal organ</tissue>
    </source>
</reference>
<comment type="function">
    <text evidence="1 4">Putative pheromone receptor implicated in the regulation of social as well as reproductive behavior.</text>
</comment>
<comment type="subcellular location">
    <subcellularLocation>
        <location evidence="5">Cell membrane</location>
        <topology evidence="2">Multi-pass membrane protein</topology>
    </subcellularLocation>
</comment>
<comment type="tissue specificity">
    <text evidence="4">Expressed in 1-4% of neurons of the vomeronasal organ. Only one pheromone receptor gene may be expressed in a particular neuron. Not expressed in the main olfactory epithelium.</text>
</comment>
<comment type="similarity">
    <text evidence="3">Belongs to the G-protein coupled receptor 1 family.</text>
</comment>
<comment type="sequence caution" evidence="5">
    <conflict type="erroneous initiation">
        <sequence resource="EMBL-CDS" id="AAC52286"/>
    </conflict>
    <text>Truncated N-terminus.</text>
</comment>
<keyword id="KW-1003">Cell membrane</keyword>
<keyword id="KW-1015">Disulfide bond</keyword>
<keyword id="KW-0297">G-protein coupled receptor</keyword>
<keyword id="KW-0325">Glycoprotein</keyword>
<keyword id="KW-0472">Membrane</keyword>
<keyword id="KW-0589">Pheromone response</keyword>
<keyword id="KW-0675">Receptor</keyword>
<keyword id="KW-1185">Reference proteome</keyword>
<keyword id="KW-0807">Transducer</keyword>
<keyword id="KW-0812">Transmembrane</keyword>
<keyword id="KW-1133">Transmembrane helix</keyword>
<feature type="chain" id="PRO_0000239982" description="Vomeronasal type-1 receptor 97">
    <location>
        <begin position="1"/>
        <end position="310"/>
    </location>
</feature>
<feature type="topological domain" description="Extracellular" evidence="2">
    <location>
        <begin position="1"/>
        <end position="19"/>
    </location>
</feature>
<feature type="transmembrane region" description="Helical; Name=1" evidence="2">
    <location>
        <begin position="20"/>
        <end position="40"/>
    </location>
</feature>
<feature type="topological domain" description="Cytoplasmic" evidence="2">
    <location>
        <begin position="41"/>
        <end position="49"/>
    </location>
</feature>
<feature type="transmembrane region" description="Helical; Name=2" evidence="2">
    <location>
        <begin position="50"/>
        <end position="70"/>
    </location>
</feature>
<feature type="topological domain" description="Extracellular" evidence="2">
    <location>
        <begin position="71"/>
        <end position="93"/>
    </location>
</feature>
<feature type="transmembrane region" description="Helical; Name=3" evidence="2">
    <location>
        <begin position="94"/>
        <end position="114"/>
    </location>
</feature>
<feature type="topological domain" description="Cytoplasmic" evidence="2">
    <location>
        <begin position="115"/>
        <end position="131"/>
    </location>
</feature>
<feature type="transmembrane region" description="Helical; Name=4" evidence="2">
    <location>
        <begin position="132"/>
        <end position="152"/>
    </location>
</feature>
<feature type="topological domain" description="Extracellular" evidence="2">
    <location>
        <begin position="153"/>
        <end position="190"/>
    </location>
</feature>
<feature type="transmembrane region" description="Helical; Name=5" evidence="2">
    <location>
        <begin position="191"/>
        <end position="211"/>
    </location>
</feature>
<feature type="topological domain" description="Cytoplasmic" evidence="2">
    <location>
        <begin position="212"/>
        <end position="238"/>
    </location>
</feature>
<feature type="transmembrane region" description="Helical; Name=6" evidence="2">
    <location>
        <begin position="239"/>
        <end position="259"/>
    </location>
</feature>
<feature type="topological domain" description="Extracellular" evidence="2">
    <location>
        <begin position="260"/>
        <end position="269"/>
    </location>
</feature>
<feature type="transmembrane region" description="Helical; Name=7" evidence="2">
    <location>
        <begin position="270"/>
        <end position="290"/>
    </location>
</feature>
<feature type="topological domain" description="Cytoplasmic" evidence="2">
    <location>
        <begin position="291"/>
        <end position="310"/>
    </location>
</feature>
<feature type="glycosylation site" description="N-linked (GlcNAc...) asparagine" evidence="2">
    <location>
        <position position="159"/>
    </location>
</feature>
<feature type="disulfide bond" evidence="3">
    <location>
        <begin position="85"/>
        <end position="172"/>
    </location>
</feature>
<feature type="sequence conflict" description="In Ref. 2; AAC52286." evidence="5" ref="2">
    <original>H</original>
    <variation>D</variation>
    <location>
        <position position="92"/>
    </location>
</feature>
<feature type="sequence conflict" description="In Ref. 2; AAC52286." evidence="5" ref="2">
    <original>Q</original>
    <variation>K</variation>
    <location>
        <position position="170"/>
    </location>
</feature>
<organism>
    <name type="scientific">Rattus norvegicus</name>
    <name type="common">Rat</name>
    <dbReference type="NCBI Taxonomy" id="10116"/>
    <lineage>
        <taxon>Eukaryota</taxon>
        <taxon>Metazoa</taxon>
        <taxon>Chordata</taxon>
        <taxon>Craniata</taxon>
        <taxon>Vertebrata</taxon>
        <taxon>Euteleostomi</taxon>
        <taxon>Mammalia</taxon>
        <taxon>Eutheria</taxon>
        <taxon>Euarchontoglires</taxon>
        <taxon>Glires</taxon>
        <taxon>Rodentia</taxon>
        <taxon>Myomorpha</taxon>
        <taxon>Muroidea</taxon>
        <taxon>Muridae</taxon>
        <taxon>Murinae</taxon>
        <taxon>Rattus</taxon>
    </lineage>
</organism>
<protein>
    <recommendedName>
        <fullName>Vomeronasal type-1 receptor 97</fullName>
    </recommendedName>
    <alternativeName>
        <fullName>Pheromone receptor VN5</fullName>
    </alternativeName>
    <alternativeName>
        <fullName>Vomeronasal receptor 5</fullName>
    </alternativeName>
    <alternativeName>
        <fullName>Vomeronasal type-1 receptor 41</fullName>
    </alternativeName>
    <alternativeName>
        <fullName>Vomeronasal type-1 receptor B12</fullName>
    </alternativeName>
    <alternativeName>
        <fullName>Vomeronasal type-1 receptor B9</fullName>
    </alternativeName>
</protein>
<accession>Q5J3M9</accession>
<accession>Q62854</accession>
<evidence type="ECO:0000250" key="1">
    <source>
        <dbReference type="UniProtKB" id="Q8VIC6"/>
    </source>
</evidence>
<evidence type="ECO:0000255" key="2"/>
<evidence type="ECO:0000255" key="3">
    <source>
        <dbReference type="PROSITE-ProRule" id="PRU00521"/>
    </source>
</evidence>
<evidence type="ECO:0000269" key="4">
    <source>
    </source>
</evidence>
<evidence type="ECO:0000305" key="5"/>
<evidence type="ECO:0000312" key="6">
    <source>
        <dbReference type="EMBL" id="AAC52286.1"/>
    </source>
</evidence>
<evidence type="ECO:0000312" key="7">
    <source>
        <dbReference type="EMBL" id="AAR87948.1"/>
    </source>
</evidence>
<name>V1R97_RAT</name>
<proteinExistence type="evidence at transcript level"/>